<sequence>MTGIVELDLRMLKKKTAMSKRTVLNENYKGIVESMSIPAEIHERNGKKYASVGSILPIHCCPPEELERRAESTHHYCGVFTDELLAPLEELAYVRLDENTAEKVFINRAKRILIVSSDGHLAQWRCAPTFESANRYIAGTPIVDQRGGVISVVVAKKNNHYAVSSFEGEGGYFESTQNWKVVEPAAGGYAYGELTFPSRTALREHVAGLRGGAGAWGDAVPVLRGGTSPRLALVLDGRQLAHYYLHNVIVDVEYL</sequence>
<dbReference type="EC" id="3.1.-.-" evidence="1 2"/>
<dbReference type="EMBL" id="BABH01004247">
    <property type="status" value="NOT_ANNOTATED_CDS"/>
    <property type="molecule type" value="Genomic_DNA"/>
</dbReference>
<dbReference type="RefSeq" id="XP_004929020.1">
    <property type="nucleotide sequence ID" value="XM_004928963.2"/>
</dbReference>
<dbReference type="SMR" id="H9JU86"/>
<dbReference type="STRING" id="7091.H9JU86"/>
<dbReference type="PaxDb" id="7091-BGIBMGA013098-TA"/>
<dbReference type="EnsemblMetazoa" id="XM_021349785.2">
    <property type="protein sequence ID" value="XP_021205460.1"/>
    <property type="gene ID" value="LOC101743840"/>
</dbReference>
<dbReference type="eggNOG" id="ENOG502TBFA">
    <property type="taxonomic scope" value="Eukaryota"/>
</dbReference>
<dbReference type="HOGENOM" id="CLU_1070683_0_0_1"/>
<dbReference type="InParanoid" id="H9JU86"/>
<dbReference type="OMA" id="AQWRCAP"/>
<dbReference type="Proteomes" id="UP000005204">
    <property type="component" value="Unassembled WGS sequence"/>
</dbReference>
<dbReference type="GO" id="GO:0061507">
    <property type="term" value="F:2',3'-cyclic GMP-AMP binding"/>
    <property type="evidence" value="ECO:0007669"/>
    <property type="project" value="UniProtKB-UniRule"/>
</dbReference>
<dbReference type="GO" id="GO:0004518">
    <property type="term" value="F:nuclease activity"/>
    <property type="evidence" value="ECO:0007669"/>
    <property type="project" value="UniProtKB-UniRule"/>
</dbReference>
<dbReference type="HAMAP" id="MF_04143">
    <property type="entry name" value="Poxins"/>
    <property type="match status" value="1"/>
</dbReference>
<dbReference type="InterPro" id="IPR006853">
    <property type="entry name" value="Poxin_vir"/>
</dbReference>
<name>POXIN_BOMMO</name>
<reference key="1">
    <citation type="journal article" date="2008" name="Insect Biochem. Mol. Biol.">
        <title>The genome of a lepidopteran model insect, the silkworm Bombyx mori.</title>
        <authorList>
            <consortium name="International Silkworm Genome Consortium"/>
        </authorList>
    </citation>
    <scope>NUCLEOTIDE SEQUENCE [LARGE SCALE GENOMIC DNA]</scope>
    <source>
        <strain>p50T</strain>
    </source>
</reference>
<reference key="2">
    <citation type="journal article" date="2019" name="Nature">
        <title>Viral and metazoan poxins are cGAMP-specific nucleases that restrict cGAS-STING signalling.</title>
        <authorList>
            <person name="Eaglesham J.B."/>
            <person name="Pan Y."/>
            <person name="Kupper T.S."/>
            <person name="Kranzusch P.J."/>
        </authorList>
    </citation>
    <scope>FUNCTION</scope>
    <scope>CATALYTIC ACTIVITY</scope>
</reference>
<keyword id="KW-0378">Hydrolase</keyword>
<keyword id="KW-0540">Nuclease</keyword>
<keyword id="KW-1185">Reference proteome</keyword>
<proteinExistence type="evidence at protein level"/>
<feature type="chain" id="PRO_0000446971" description="Poxin">
    <location>
        <begin position="1"/>
        <end position="255"/>
    </location>
</feature>
<comment type="function">
    <text evidence="1 2">Nuclease that cleaves 2',3'-cGAMP.</text>
</comment>
<comment type="catalytic activity">
    <reaction evidence="1 2">
        <text>2',3'-cGAMP + H2O = Gp(2'-5')Ap(3') + H(+)</text>
        <dbReference type="Rhea" id="RHEA:59472"/>
        <dbReference type="ChEBI" id="CHEBI:15377"/>
        <dbReference type="ChEBI" id="CHEBI:15378"/>
        <dbReference type="ChEBI" id="CHEBI:143093"/>
        <dbReference type="ChEBI" id="CHEBI:143098"/>
    </reaction>
    <physiologicalReaction direction="left-to-right" evidence="1 4">
        <dbReference type="Rhea" id="RHEA:59473"/>
    </physiologicalReaction>
</comment>
<comment type="similarity">
    <text evidence="1">Belongs to the poxin family. Highly divergent.</text>
</comment>
<comment type="caution">
    <text evidence="1 2">The active site cannot be determined by similarity to the viral poxins.</text>
</comment>
<organism>
    <name type="scientific">Bombyx mori</name>
    <name type="common">Silk moth</name>
    <dbReference type="NCBI Taxonomy" id="7091"/>
    <lineage>
        <taxon>Eukaryota</taxon>
        <taxon>Metazoa</taxon>
        <taxon>Ecdysozoa</taxon>
        <taxon>Arthropoda</taxon>
        <taxon>Hexapoda</taxon>
        <taxon>Insecta</taxon>
        <taxon>Pterygota</taxon>
        <taxon>Neoptera</taxon>
        <taxon>Endopterygota</taxon>
        <taxon>Lepidoptera</taxon>
        <taxon>Glossata</taxon>
        <taxon>Ditrysia</taxon>
        <taxon>Bombycoidea</taxon>
        <taxon>Bombycidae</taxon>
        <taxon>Bombycinae</taxon>
        <taxon>Bombyx</taxon>
    </lineage>
</organism>
<evidence type="ECO:0000255" key="1">
    <source>
        <dbReference type="HAMAP-Rule" id="MF_04143"/>
    </source>
</evidence>
<evidence type="ECO:0000269" key="2">
    <source>
    </source>
</evidence>
<evidence type="ECO:0000303" key="3">
    <source>
    </source>
</evidence>
<evidence type="ECO:0000305" key="4">
    <source>
    </source>
</evidence>
<protein>
    <recommendedName>
        <fullName evidence="1 3">Poxin</fullName>
        <ecNumber evidence="1 2">3.1.-.-</ecNumber>
    </recommendedName>
</protein>
<accession>H9JU86</accession>